<dbReference type="EC" id="2.7.11.24" evidence="4"/>
<dbReference type="EMBL" id="X79483">
    <property type="protein sequence ID" value="CAA55984.1"/>
    <property type="molecule type" value="mRNA"/>
</dbReference>
<dbReference type="EMBL" id="Y10487">
    <property type="protein sequence ID" value="CAA71511.1"/>
    <property type="molecule type" value="mRNA"/>
</dbReference>
<dbReference type="EMBL" id="U66243">
    <property type="protein sequence ID" value="AAB40118.1"/>
    <property type="molecule type" value="mRNA"/>
</dbReference>
<dbReference type="EMBL" id="CR456515">
    <property type="protein sequence ID" value="CAG30401.1"/>
    <property type="molecule type" value="mRNA"/>
</dbReference>
<dbReference type="EMBL" id="AL022328">
    <property type="status" value="NOT_ANNOTATED_CDS"/>
    <property type="molecule type" value="Genomic_DNA"/>
</dbReference>
<dbReference type="EMBL" id="BC015741">
    <property type="protein sequence ID" value="AAH15741.1"/>
    <property type="molecule type" value="mRNA"/>
</dbReference>
<dbReference type="CCDS" id="CCDS14089.1">
    <molecule id="P53778-1"/>
</dbReference>
<dbReference type="CCDS" id="CCDS77688.1">
    <molecule id="P53778-2"/>
</dbReference>
<dbReference type="PIR" id="JC5252">
    <property type="entry name" value="JC5252"/>
</dbReference>
<dbReference type="PIR" id="JC6138">
    <property type="entry name" value="JC6138"/>
</dbReference>
<dbReference type="RefSeq" id="NP_001290181.1">
    <molecule id="P53778-2"/>
    <property type="nucleotide sequence ID" value="NM_001303252.3"/>
</dbReference>
<dbReference type="RefSeq" id="NP_002960.2">
    <molecule id="P53778-1"/>
    <property type="nucleotide sequence ID" value="NM_002969.5"/>
</dbReference>
<dbReference type="PDB" id="1CM8">
    <property type="method" value="X-ray"/>
    <property type="resolution" value="2.40 A"/>
    <property type="chains" value="A/B=1-367"/>
</dbReference>
<dbReference type="PDB" id="4QUM">
    <property type="method" value="X-ray"/>
    <property type="resolution" value="2.52 A"/>
    <property type="chains" value="B=182-190"/>
</dbReference>
<dbReference type="PDB" id="6UNA">
    <property type="method" value="X-ray"/>
    <property type="resolution" value="2.55 A"/>
    <property type="chains" value="A/B=7-367"/>
</dbReference>
<dbReference type="PDB" id="7CGA">
    <property type="method" value="X-ray"/>
    <property type="resolution" value="3.15 A"/>
    <property type="chains" value="A/B/C/D=9-353"/>
</dbReference>
<dbReference type="PDBsum" id="1CM8"/>
<dbReference type="PDBsum" id="4QUM"/>
<dbReference type="PDBsum" id="6UNA"/>
<dbReference type="PDBsum" id="7CGA"/>
<dbReference type="SMR" id="P53778"/>
<dbReference type="BioGRID" id="112207">
    <property type="interactions" value="75"/>
</dbReference>
<dbReference type="DIP" id="DIP-34241N"/>
<dbReference type="FunCoup" id="P53778">
    <property type="interactions" value="2920"/>
</dbReference>
<dbReference type="IntAct" id="P53778">
    <property type="interactions" value="35"/>
</dbReference>
<dbReference type="MINT" id="P53778"/>
<dbReference type="STRING" id="9606.ENSP00000215659"/>
<dbReference type="BindingDB" id="P53778"/>
<dbReference type="ChEMBL" id="CHEMBL4674"/>
<dbReference type="DrugBank" id="DB03777">
    <property type="generic name" value="Bisindolylmaleimide I"/>
</dbReference>
<dbReference type="DrugBank" id="DB05403">
    <property type="generic name" value="CEP-1347"/>
</dbReference>
<dbReference type="DrugBank" id="DB12429">
    <property type="generic name" value="CI-1040"/>
</dbReference>
<dbReference type="DrugBank" id="DB05157">
    <property type="generic name" value="KC706"/>
</dbReference>
<dbReference type="DrugBank" id="DB01017">
    <property type="generic name" value="Minocycline"/>
</dbReference>
<dbReference type="DrugBank" id="DB07138">
    <property type="generic name" value="Neflamapimod"/>
</dbReference>
<dbReference type="DrugBank" id="DB04395">
    <property type="generic name" value="Phosphoaminophosphonic Acid-Adenylate Ester"/>
</dbReference>
<dbReference type="DrugBank" id="DB02482">
    <property type="generic name" value="Phosphonothreonine"/>
</dbReference>
<dbReference type="DrugBank" id="DB04462">
    <property type="generic name" value="Tetrabromo-2-Benzotriazole"/>
</dbReference>
<dbReference type="DrugCentral" id="P53778"/>
<dbReference type="GuidetoPHARMACOLOGY" id="1501"/>
<dbReference type="iPTMnet" id="P53778"/>
<dbReference type="PhosphoSitePlus" id="P53778"/>
<dbReference type="BioMuta" id="MAPK12"/>
<dbReference type="DMDM" id="2851522"/>
<dbReference type="CPTAC" id="CPTAC-2913"/>
<dbReference type="CPTAC" id="CPTAC-2914"/>
<dbReference type="CPTAC" id="CPTAC-874"/>
<dbReference type="CPTAC" id="CPTAC-875"/>
<dbReference type="jPOST" id="P53778"/>
<dbReference type="MassIVE" id="P53778"/>
<dbReference type="PaxDb" id="9606-ENSP00000215659"/>
<dbReference type="PeptideAtlas" id="P53778"/>
<dbReference type="ProteomicsDB" id="56615">
    <molecule id="P53778-1"/>
</dbReference>
<dbReference type="Pumba" id="P53778"/>
<dbReference type="Antibodypedia" id="14291">
    <property type="antibodies" value="552 antibodies from 40 providers"/>
</dbReference>
<dbReference type="DNASU" id="6300"/>
<dbReference type="Ensembl" id="ENST00000215659.13">
    <molecule id="P53778-1"/>
    <property type="protein sequence ID" value="ENSP00000215659.8"/>
    <property type="gene ID" value="ENSG00000188130.14"/>
</dbReference>
<dbReference type="Ensembl" id="ENST00000622558.4">
    <molecule id="P53778-2"/>
    <property type="protein sequence ID" value="ENSP00000479972.1"/>
    <property type="gene ID" value="ENSG00000188130.14"/>
</dbReference>
<dbReference type="GeneID" id="6300"/>
<dbReference type="KEGG" id="hsa:6300"/>
<dbReference type="MANE-Select" id="ENST00000215659.13">
    <property type="protein sequence ID" value="ENSP00000215659.8"/>
    <property type="RefSeq nucleotide sequence ID" value="NM_002969.6"/>
    <property type="RefSeq protein sequence ID" value="NP_002960.2"/>
</dbReference>
<dbReference type="UCSC" id="uc003bkl.2">
    <molecule id="P53778-1"/>
    <property type="organism name" value="human"/>
</dbReference>
<dbReference type="AGR" id="HGNC:6874"/>
<dbReference type="CTD" id="6300"/>
<dbReference type="DisGeNET" id="6300"/>
<dbReference type="GeneCards" id="MAPK12"/>
<dbReference type="HGNC" id="HGNC:6874">
    <property type="gene designation" value="MAPK12"/>
</dbReference>
<dbReference type="HPA" id="ENSG00000188130">
    <property type="expression patterns" value="Group enriched (skeletal muscle, tongue)"/>
</dbReference>
<dbReference type="MIM" id="602399">
    <property type="type" value="gene"/>
</dbReference>
<dbReference type="neXtProt" id="NX_P53778"/>
<dbReference type="OpenTargets" id="ENSG00000188130"/>
<dbReference type="PharmGKB" id="PA30619"/>
<dbReference type="VEuPathDB" id="HostDB:ENSG00000188130"/>
<dbReference type="eggNOG" id="KOG0660">
    <property type="taxonomic scope" value="Eukaryota"/>
</dbReference>
<dbReference type="GeneTree" id="ENSGT00940000156189"/>
<dbReference type="InParanoid" id="P53778"/>
<dbReference type="OMA" id="IAMMRFF"/>
<dbReference type="OrthoDB" id="192887at2759"/>
<dbReference type="PAN-GO" id="P53778">
    <property type="GO annotations" value="4 GO annotations based on evolutionary models"/>
</dbReference>
<dbReference type="PhylomeDB" id="P53778"/>
<dbReference type="TreeFam" id="TF105100"/>
<dbReference type="BRENDA" id="2.7.11.24">
    <property type="organism ID" value="2681"/>
</dbReference>
<dbReference type="PathwayCommons" id="P53778"/>
<dbReference type="Reactome" id="R-HSA-168638">
    <property type="pathway name" value="NOD1/2 Signaling Pathway"/>
</dbReference>
<dbReference type="Reactome" id="R-HSA-171007">
    <property type="pathway name" value="p38MAPK events"/>
</dbReference>
<dbReference type="Reactome" id="R-HSA-2151209">
    <property type="pathway name" value="Activation of PPARGC1A (PGC-1alpha) by phosphorylation"/>
</dbReference>
<dbReference type="Reactome" id="R-HSA-4420097">
    <property type="pathway name" value="VEGFA-VEGFR2 Pathway"/>
</dbReference>
<dbReference type="Reactome" id="R-HSA-525793">
    <property type="pathway name" value="Myogenesis"/>
</dbReference>
<dbReference type="Reactome" id="R-HSA-5675221">
    <property type="pathway name" value="Negative regulation of MAPK pathway"/>
</dbReference>
<dbReference type="SignaLink" id="P53778"/>
<dbReference type="SIGNOR" id="P53778"/>
<dbReference type="BioGRID-ORCS" id="6300">
    <property type="hits" value="6 hits in 1188 CRISPR screens"/>
</dbReference>
<dbReference type="ChiTaRS" id="MAPK12">
    <property type="organism name" value="human"/>
</dbReference>
<dbReference type="EvolutionaryTrace" id="P53778"/>
<dbReference type="GeneWiki" id="MAPK12"/>
<dbReference type="GenomeRNAi" id="6300"/>
<dbReference type="Pharos" id="P53778">
    <property type="development level" value="Tchem"/>
</dbReference>
<dbReference type="PRO" id="PR:P53778"/>
<dbReference type="Proteomes" id="UP000005640">
    <property type="component" value="Chromosome 22"/>
</dbReference>
<dbReference type="RNAct" id="P53778">
    <property type="molecule type" value="protein"/>
</dbReference>
<dbReference type="Bgee" id="ENSG00000188130">
    <property type="expression patterns" value="Expressed in gastrocnemius and 163 other cell types or tissues"/>
</dbReference>
<dbReference type="ExpressionAtlas" id="P53778">
    <property type="expression patterns" value="baseline and differential"/>
</dbReference>
<dbReference type="GO" id="GO:0005737">
    <property type="term" value="C:cytoplasm"/>
    <property type="evidence" value="ECO:0000318"/>
    <property type="project" value="GO_Central"/>
</dbReference>
<dbReference type="GO" id="GO:0005829">
    <property type="term" value="C:cytosol"/>
    <property type="evidence" value="ECO:0000304"/>
    <property type="project" value="Reactome"/>
</dbReference>
<dbReference type="GO" id="GO:0005739">
    <property type="term" value="C:mitochondrion"/>
    <property type="evidence" value="ECO:0007669"/>
    <property type="project" value="UniProtKB-SubCell"/>
</dbReference>
<dbReference type="GO" id="GO:0005654">
    <property type="term" value="C:nucleoplasm"/>
    <property type="evidence" value="ECO:0000304"/>
    <property type="project" value="Reactome"/>
</dbReference>
<dbReference type="GO" id="GO:0005634">
    <property type="term" value="C:nucleus"/>
    <property type="evidence" value="ECO:0000318"/>
    <property type="project" value="GO_Central"/>
</dbReference>
<dbReference type="GO" id="GO:0005524">
    <property type="term" value="F:ATP binding"/>
    <property type="evidence" value="ECO:0007669"/>
    <property type="project" value="UniProtKB-KW"/>
</dbReference>
<dbReference type="GO" id="GO:0000287">
    <property type="term" value="F:magnesium ion binding"/>
    <property type="evidence" value="ECO:0000314"/>
    <property type="project" value="UniProtKB"/>
</dbReference>
<dbReference type="GO" id="GO:0004707">
    <property type="term" value="F:MAP kinase activity"/>
    <property type="evidence" value="ECO:0000304"/>
    <property type="project" value="ProtInc"/>
</dbReference>
<dbReference type="GO" id="GO:0016504">
    <property type="term" value="F:peptidase activator activity"/>
    <property type="evidence" value="ECO:0000303"/>
    <property type="project" value="ParkinsonsUK-UCL"/>
</dbReference>
<dbReference type="GO" id="GO:0106310">
    <property type="term" value="F:protein serine kinase activity"/>
    <property type="evidence" value="ECO:0007669"/>
    <property type="project" value="RHEA"/>
</dbReference>
<dbReference type="GO" id="GO:0004674">
    <property type="term" value="F:protein serine/threonine kinase activity"/>
    <property type="evidence" value="ECO:0000314"/>
    <property type="project" value="UniProtKB"/>
</dbReference>
<dbReference type="GO" id="GO:0035556">
    <property type="term" value="P:intracellular signal transduction"/>
    <property type="evidence" value="ECO:0000318"/>
    <property type="project" value="GO_Central"/>
</dbReference>
<dbReference type="GO" id="GO:0000165">
    <property type="term" value="P:MAPK cascade"/>
    <property type="evidence" value="ECO:0000314"/>
    <property type="project" value="BHF-UCL"/>
</dbReference>
<dbReference type="GO" id="GO:0007517">
    <property type="term" value="P:muscle organ development"/>
    <property type="evidence" value="ECO:0000304"/>
    <property type="project" value="ProtInc"/>
</dbReference>
<dbReference type="GO" id="GO:0045445">
    <property type="term" value="P:myoblast differentiation"/>
    <property type="evidence" value="ECO:0000314"/>
    <property type="project" value="UniProtKB"/>
</dbReference>
<dbReference type="GO" id="GO:0045786">
    <property type="term" value="P:negative regulation of cell cycle"/>
    <property type="evidence" value="ECO:0007669"/>
    <property type="project" value="Ensembl"/>
</dbReference>
<dbReference type="GO" id="GO:0051149">
    <property type="term" value="P:positive regulation of muscle cell differentiation"/>
    <property type="evidence" value="ECO:0000304"/>
    <property type="project" value="Reactome"/>
</dbReference>
<dbReference type="GO" id="GO:0051726">
    <property type="term" value="P:regulation of cell cycle"/>
    <property type="evidence" value="ECO:0000304"/>
    <property type="project" value="ProtInc"/>
</dbReference>
<dbReference type="GO" id="GO:0007165">
    <property type="term" value="P:signal transduction"/>
    <property type="evidence" value="ECO:0000304"/>
    <property type="project" value="ProtInc"/>
</dbReference>
<dbReference type="GO" id="GO:0042770">
    <property type="term" value="P:signal transduction in response to DNA damage"/>
    <property type="evidence" value="ECO:0000304"/>
    <property type="project" value="ProtInc"/>
</dbReference>
<dbReference type="CDD" id="cd07880">
    <property type="entry name" value="STKc_p38gamma"/>
    <property type="match status" value="1"/>
</dbReference>
<dbReference type="FunFam" id="1.10.510.10:FF:000170">
    <property type="entry name" value="Mitogen-activated protein kinase"/>
    <property type="match status" value="1"/>
</dbReference>
<dbReference type="FunFam" id="3.30.200.20:FF:000769">
    <property type="entry name" value="Mitogen-activated protein kinase 14"/>
    <property type="match status" value="1"/>
</dbReference>
<dbReference type="Gene3D" id="3.30.200.20">
    <property type="entry name" value="Phosphorylase Kinase, domain 1"/>
    <property type="match status" value="1"/>
</dbReference>
<dbReference type="Gene3D" id="1.10.510.10">
    <property type="entry name" value="Transferase(Phosphotransferase) domain 1"/>
    <property type="match status" value="1"/>
</dbReference>
<dbReference type="InterPro" id="IPR011009">
    <property type="entry name" value="Kinase-like_dom_sf"/>
</dbReference>
<dbReference type="InterPro" id="IPR050117">
    <property type="entry name" value="MAP_kinase"/>
</dbReference>
<dbReference type="InterPro" id="IPR003527">
    <property type="entry name" value="MAP_kinase_CS"/>
</dbReference>
<dbReference type="InterPro" id="IPR038786">
    <property type="entry name" value="MAPK12"/>
</dbReference>
<dbReference type="InterPro" id="IPR008352">
    <property type="entry name" value="MAPK_p38-like"/>
</dbReference>
<dbReference type="InterPro" id="IPR000719">
    <property type="entry name" value="Prot_kinase_dom"/>
</dbReference>
<dbReference type="InterPro" id="IPR017441">
    <property type="entry name" value="Protein_kinase_ATP_BS"/>
</dbReference>
<dbReference type="PANTHER" id="PTHR24055">
    <property type="entry name" value="MITOGEN-ACTIVATED PROTEIN KINASE"/>
    <property type="match status" value="1"/>
</dbReference>
<dbReference type="Pfam" id="PF00069">
    <property type="entry name" value="Pkinase"/>
    <property type="match status" value="1"/>
</dbReference>
<dbReference type="PRINTS" id="PR01773">
    <property type="entry name" value="P38MAPKINASE"/>
</dbReference>
<dbReference type="SMART" id="SM00220">
    <property type="entry name" value="S_TKc"/>
    <property type="match status" value="1"/>
</dbReference>
<dbReference type="SUPFAM" id="SSF56112">
    <property type="entry name" value="Protein kinase-like (PK-like)"/>
    <property type="match status" value="1"/>
</dbReference>
<dbReference type="PROSITE" id="PS01351">
    <property type="entry name" value="MAPK"/>
    <property type="match status" value="1"/>
</dbReference>
<dbReference type="PROSITE" id="PS00107">
    <property type="entry name" value="PROTEIN_KINASE_ATP"/>
    <property type="match status" value="1"/>
</dbReference>
<dbReference type="PROSITE" id="PS50011">
    <property type="entry name" value="PROTEIN_KINASE_DOM"/>
    <property type="match status" value="1"/>
</dbReference>
<feature type="chain" id="PRO_0000186282" description="Mitogen-activated protein kinase 12">
    <location>
        <begin position="1"/>
        <end position="367"/>
    </location>
</feature>
<feature type="domain" description="Protein kinase" evidence="3">
    <location>
        <begin position="27"/>
        <end position="311"/>
    </location>
</feature>
<feature type="short sequence motif" description="TXY">
    <location>
        <begin position="183"/>
        <end position="185"/>
    </location>
</feature>
<feature type="active site" description="Proton acceptor" evidence="3">
    <location>
        <position position="153"/>
    </location>
</feature>
<feature type="binding site" evidence="3">
    <location>
        <begin position="33"/>
        <end position="41"/>
    </location>
    <ligand>
        <name>ATP</name>
        <dbReference type="ChEBI" id="CHEBI:30616"/>
    </ligand>
</feature>
<feature type="binding site" evidence="3">
    <location>
        <position position="56"/>
    </location>
    <ligand>
        <name>ATP</name>
        <dbReference type="ChEBI" id="CHEBI:30616"/>
    </ligand>
</feature>
<feature type="modified residue" description="Phosphothreonine; by MAP2K3 and MAP2K6" evidence="2">
    <location>
        <position position="183"/>
    </location>
</feature>
<feature type="modified residue" description="Phosphotyrosine" evidence="21">
    <location>
        <position position="185"/>
    </location>
</feature>
<feature type="splice variant" id="VSP_055224" description="In isoform 2." evidence="19">
    <location>
        <begin position="142"/>
        <end position="151"/>
    </location>
</feature>
<feature type="sequence variant" id="VAR_042265" description="In dbSNP:rs34422484." evidence="11 12">
    <original>T</original>
    <variation>M</variation>
    <location>
        <position position="103"/>
    </location>
</feature>
<feature type="sequence variant" id="VAR_042266" description="In dbSNP:rs35396905." evidence="12">
    <original>D</original>
    <variation>N</variation>
    <location>
        <position position="230"/>
    </location>
</feature>
<feature type="sequence variant" id="VAR_012002" description="In dbSNP:rs2066776.">
    <original>T</original>
    <variation>M</variation>
    <location>
        <position position="244"/>
    </location>
</feature>
<feature type="mutagenesis site" description="Emulation of the active state." evidence="10">
    <original>D</original>
    <variation>A</variation>
    <location>
        <position position="179"/>
    </location>
</feature>
<feature type="mutagenesis site" description="Loss of activity." evidence="17">
    <original>Y</original>
    <variation>F</variation>
    <location>
        <position position="185"/>
    </location>
</feature>
<feature type="mutagenesis site" description="No effect." evidence="10">
    <original>F</original>
    <variation>S</variation>
    <location>
        <position position="330"/>
    </location>
</feature>
<feature type="sequence conflict" description="In Ref. 1; CAA55984." evidence="20" ref="1">
    <original>A</original>
    <variation>T</variation>
    <location>
        <position position="7"/>
    </location>
</feature>
<feature type="sequence conflict" description="In Ref. 1; CAA55984." evidence="20" ref="1">
    <original>R</original>
    <variation>L</variation>
    <location>
        <position position="70"/>
    </location>
</feature>
<feature type="sequence conflict" description="In Ref. 1; CAA55984." evidence="20" ref="1">
    <original>L</original>
    <variation>M</variation>
    <location>
        <position position="138"/>
    </location>
</feature>
<feature type="sequence conflict" description="In Ref. 1; CAA55984." evidence="20" ref="1">
    <original>MR</original>
    <variation>IA</variation>
    <location>
        <begin position="201"/>
        <end position="202"/>
    </location>
</feature>
<feature type="sequence conflict" description="In Ref. 3; AAB40118." evidence="20" ref="3">
    <original>Y</original>
    <variation>N</variation>
    <location>
        <position position="261"/>
    </location>
</feature>
<feature type="sequence conflict" description="In Ref. 1; CAA55984." evidence="20" ref="1">
    <original>EQ</original>
    <variation>DI</variation>
    <location>
        <begin position="297"/>
        <end position="298"/>
    </location>
</feature>
<feature type="sequence conflict" description="In Ref. 1; CAA55984." evidence="20" ref="1">
    <original>V</original>
    <variation>L</variation>
    <location>
        <position position="300"/>
    </location>
</feature>
<feature type="sequence conflict" description="In Ref. 1; CAA55984." evidence="20" ref="1">
    <original>A</original>
    <variation>F</variation>
    <location>
        <position position="305"/>
    </location>
</feature>
<feature type="sequence conflict" description="In Ref. 1; CAA55984." evidence="20" ref="1">
    <original>A</original>
    <variation>S</variation>
    <location>
        <position position="307"/>
    </location>
</feature>
<feature type="sequence conflict" description="In Ref. 1; CAA55984." evidence="20" ref="1">
    <original>DV</original>
    <variation>YF</variation>
    <location>
        <begin position="332"/>
        <end position="333"/>
    </location>
</feature>
<feature type="strand" evidence="23">
    <location>
        <begin position="11"/>
        <end position="15"/>
    </location>
</feature>
<feature type="strand" evidence="22">
    <location>
        <begin position="17"/>
        <end position="21"/>
    </location>
</feature>
<feature type="strand" evidence="22">
    <location>
        <begin position="24"/>
        <end position="32"/>
    </location>
</feature>
<feature type="strand" evidence="22">
    <location>
        <begin position="41"/>
        <end position="46"/>
    </location>
</feature>
<feature type="turn" evidence="22">
    <location>
        <begin position="47"/>
        <end position="49"/>
    </location>
</feature>
<feature type="strand" evidence="22">
    <location>
        <begin position="52"/>
        <end position="57"/>
    </location>
</feature>
<feature type="helix" evidence="22">
    <location>
        <begin position="65"/>
        <end position="80"/>
    </location>
</feature>
<feature type="strand" evidence="22">
    <location>
        <begin position="90"/>
        <end position="93"/>
    </location>
</feature>
<feature type="turn" evidence="22">
    <location>
        <begin position="99"/>
        <end position="101"/>
    </location>
</feature>
<feature type="strand" evidence="22">
    <location>
        <begin position="106"/>
        <end position="110"/>
    </location>
</feature>
<feature type="strand" evidence="22">
    <location>
        <begin position="113"/>
        <end position="115"/>
    </location>
</feature>
<feature type="helix" evidence="22">
    <location>
        <begin position="116"/>
        <end position="122"/>
    </location>
</feature>
<feature type="helix" evidence="22">
    <location>
        <begin position="127"/>
        <end position="146"/>
    </location>
</feature>
<feature type="helix" evidence="22">
    <location>
        <begin position="156"/>
        <end position="158"/>
    </location>
</feature>
<feature type="strand" evidence="22">
    <location>
        <begin position="159"/>
        <end position="161"/>
    </location>
</feature>
<feature type="strand" evidence="22">
    <location>
        <begin position="167"/>
        <end position="169"/>
    </location>
</feature>
<feature type="helix" evidence="22">
    <location>
        <begin position="189"/>
        <end position="191"/>
    </location>
</feature>
<feature type="helix" evidence="22">
    <location>
        <begin position="195"/>
        <end position="198"/>
    </location>
</feature>
<feature type="turn" evidence="22">
    <location>
        <begin position="199"/>
        <end position="201"/>
    </location>
</feature>
<feature type="helix" evidence="22">
    <location>
        <begin position="207"/>
        <end position="221"/>
    </location>
</feature>
<feature type="helix" evidence="22">
    <location>
        <begin position="231"/>
        <end position="242"/>
    </location>
</feature>
<feature type="helix" evidence="22">
    <location>
        <begin position="247"/>
        <end position="251"/>
    </location>
</feature>
<feature type="helix" evidence="22">
    <location>
        <begin position="256"/>
        <end position="264"/>
    </location>
</feature>
<feature type="helix" evidence="22">
    <location>
        <begin position="273"/>
        <end position="275"/>
    </location>
</feature>
<feature type="helix" evidence="22">
    <location>
        <begin position="282"/>
        <end position="291"/>
    </location>
</feature>
<feature type="turn" evidence="22">
    <location>
        <begin position="296"/>
        <end position="298"/>
    </location>
</feature>
<feature type="helix" evidence="22">
    <location>
        <begin position="302"/>
        <end position="307"/>
    </location>
</feature>
<feature type="helix" evidence="22">
    <location>
        <begin position="309"/>
        <end position="311"/>
    </location>
</feature>
<feature type="turn" evidence="22">
    <location>
        <begin position="312"/>
        <end position="314"/>
    </location>
</feature>
<feature type="helix" evidence="23">
    <location>
        <begin position="329"/>
        <end position="332"/>
    </location>
</feature>
<feature type="helix" evidence="22">
    <location>
        <begin position="337"/>
        <end position="349"/>
    </location>
</feature>
<gene>
    <name type="primary">MAPK12</name>
    <name type="synonym">ERK6</name>
    <name type="synonym">SAPK3</name>
</gene>
<reference key="1">
    <citation type="journal article" date="1996" name="Proc. Natl. Acad. Sci. U.S.A.">
        <title>ERK6, a mitogen-activated protein kinase involved in C2C12 myoblast differentiation.</title>
        <authorList>
            <person name="Lechner C."/>
            <person name="Zahalka M.A."/>
            <person name="Giot J.-F."/>
            <person name="Moeller N.P.H."/>
            <person name="Ullrich A."/>
        </authorList>
    </citation>
    <scope>NUCLEOTIDE SEQUENCE [MRNA] (ISOFORM 1)</scope>
    <scope>FUNCTION</scope>
    <scope>TISSUE SPECIFICITY</scope>
    <scope>MUTAGENESIS OF TYR-185</scope>
    <source>
        <tissue>Skeletal muscle</tissue>
    </source>
</reference>
<reference key="2">
    <citation type="journal article" date="1997" name="Genomics">
        <title>Assignment of the human stress-activated protein kinase-3 gene (SAPK3) to chromosome 22q13.3 by fluorescence in situ hybridization.</title>
        <authorList>
            <person name="Goedert M."/>
            <person name="Hasegawa J."/>
            <person name="Craxton M."/>
            <person name="Leversha M.A."/>
            <person name="Clegg S."/>
        </authorList>
    </citation>
    <scope>NUCLEOTIDE SEQUENCE [MRNA] (ISOFORM 1)</scope>
    <source>
        <tissue>Skeletal muscle</tissue>
    </source>
</reference>
<reference key="3">
    <citation type="journal article" date="1996" name="Biochem. Biophys. Res. Commun.">
        <title>The primary structure of p38 gamma: a new member of p38 group of MAP kinases.</title>
        <authorList>
            <person name="Li Z."/>
            <person name="Jiang Y."/>
            <person name="Ulevitch R.J."/>
            <person name="Han J."/>
        </authorList>
    </citation>
    <scope>NUCLEOTIDE SEQUENCE [MRNA] (ISOFORM 1)</scope>
</reference>
<reference key="4">
    <citation type="journal article" date="2004" name="Genome Biol.">
        <title>A genome annotation-driven approach to cloning the human ORFeome.</title>
        <authorList>
            <person name="Collins J.E."/>
            <person name="Wright C.L."/>
            <person name="Edwards C.A."/>
            <person name="Davis M.P."/>
            <person name="Grinham J.A."/>
            <person name="Cole C.G."/>
            <person name="Goward M.E."/>
            <person name="Aguado B."/>
            <person name="Mallya M."/>
            <person name="Mokrab Y."/>
            <person name="Huckle E.J."/>
            <person name="Beare D.M."/>
            <person name="Dunham I."/>
        </authorList>
    </citation>
    <scope>NUCLEOTIDE SEQUENCE [LARGE SCALE MRNA] (ISOFORM 2)</scope>
    <scope>VARIANT MET-103</scope>
</reference>
<reference key="5">
    <citation type="journal article" date="1999" name="Nature">
        <title>The DNA sequence of human chromosome 22.</title>
        <authorList>
            <person name="Dunham I."/>
            <person name="Hunt A.R."/>
            <person name="Collins J.E."/>
            <person name="Bruskiewich R."/>
            <person name="Beare D.M."/>
            <person name="Clamp M."/>
            <person name="Smink L.J."/>
            <person name="Ainscough R."/>
            <person name="Almeida J.P."/>
            <person name="Babbage A.K."/>
            <person name="Bagguley C."/>
            <person name="Bailey J."/>
            <person name="Barlow K.F."/>
            <person name="Bates K.N."/>
            <person name="Beasley O.P."/>
            <person name="Bird C.P."/>
            <person name="Blakey S.E."/>
            <person name="Bridgeman A.M."/>
            <person name="Buck D."/>
            <person name="Burgess J."/>
            <person name="Burrill W.D."/>
            <person name="Burton J."/>
            <person name="Carder C."/>
            <person name="Carter N.P."/>
            <person name="Chen Y."/>
            <person name="Clark G."/>
            <person name="Clegg S.M."/>
            <person name="Cobley V.E."/>
            <person name="Cole C.G."/>
            <person name="Collier R.E."/>
            <person name="Connor R."/>
            <person name="Conroy D."/>
            <person name="Corby N.R."/>
            <person name="Coville G.J."/>
            <person name="Cox A.V."/>
            <person name="Davis J."/>
            <person name="Dawson E."/>
            <person name="Dhami P.D."/>
            <person name="Dockree C."/>
            <person name="Dodsworth S.J."/>
            <person name="Durbin R.M."/>
            <person name="Ellington A.G."/>
            <person name="Evans K.L."/>
            <person name="Fey J.M."/>
            <person name="Fleming K."/>
            <person name="French L."/>
            <person name="Garner A.A."/>
            <person name="Gilbert J.G.R."/>
            <person name="Goward M.E."/>
            <person name="Grafham D.V."/>
            <person name="Griffiths M.N.D."/>
            <person name="Hall C."/>
            <person name="Hall R.E."/>
            <person name="Hall-Tamlyn G."/>
            <person name="Heathcott R.W."/>
            <person name="Ho S."/>
            <person name="Holmes S."/>
            <person name="Hunt S.E."/>
            <person name="Jones M.C."/>
            <person name="Kershaw J."/>
            <person name="Kimberley A.M."/>
            <person name="King A."/>
            <person name="Laird G.K."/>
            <person name="Langford C.F."/>
            <person name="Leversha M.A."/>
            <person name="Lloyd C."/>
            <person name="Lloyd D.M."/>
            <person name="Martyn I.D."/>
            <person name="Mashreghi-Mohammadi M."/>
            <person name="Matthews L.H."/>
            <person name="Mccann O.T."/>
            <person name="Mcclay J."/>
            <person name="Mclaren S."/>
            <person name="McMurray A.A."/>
            <person name="Milne S.A."/>
            <person name="Mortimore B.J."/>
            <person name="Odell C.N."/>
            <person name="Pavitt R."/>
            <person name="Pearce A.V."/>
            <person name="Pearson D."/>
            <person name="Phillimore B.J.C.T."/>
            <person name="Phillips S.H."/>
            <person name="Plumb R.W."/>
            <person name="Ramsay H."/>
            <person name="Ramsey Y."/>
            <person name="Rogers L."/>
            <person name="Ross M.T."/>
            <person name="Scott C.E."/>
            <person name="Sehra H.K."/>
            <person name="Skuce C.D."/>
            <person name="Smalley S."/>
            <person name="Smith M.L."/>
            <person name="Soderlund C."/>
            <person name="Spragon L."/>
            <person name="Steward C.A."/>
            <person name="Sulston J.E."/>
            <person name="Swann R.M."/>
            <person name="Vaudin M."/>
            <person name="Wall M."/>
            <person name="Wallis J.M."/>
            <person name="Whiteley M.N."/>
            <person name="Willey D.L."/>
            <person name="Williams L."/>
            <person name="Williams S.A."/>
            <person name="Williamson H."/>
            <person name="Wilmer T.E."/>
            <person name="Wilming L."/>
            <person name="Wright C.L."/>
            <person name="Hubbard T."/>
            <person name="Bentley D.R."/>
            <person name="Beck S."/>
            <person name="Rogers J."/>
            <person name="Shimizu N."/>
            <person name="Minoshima S."/>
            <person name="Kawasaki K."/>
            <person name="Sasaki T."/>
            <person name="Asakawa S."/>
            <person name="Kudoh J."/>
            <person name="Shintani A."/>
            <person name="Shibuya K."/>
            <person name="Yoshizaki Y."/>
            <person name="Aoki N."/>
            <person name="Mitsuyama S."/>
            <person name="Roe B.A."/>
            <person name="Chen F."/>
            <person name="Chu L."/>
            <person name="Crabtree J."/>
            <person name="Deschamps S."/>
            <person name="Do A."/>
            <person name="Do T."/>
            <person name="Dorman A."/>
            <person name="Fang F."/>
            <person name="Fu Y."/>
            <person name="Hu P."/>
            <person name="Hua A."/>
            <person name="Kenton S."/>
            <person name="Lai H."/>
            <person name="Lao H.I."/>
            <person name="Lewis J."/>
            <person name="Lewis S."/>
            <person name="Lin S.-P."/>
            <person name="Loh P."/>
            <person name="Malaj E."/>
            <person name="Nguyen T."/>
            <person name="Pan H."/>
            <person name="Phan S."/>
            <person name="Qi S."/>
            <person name="Qian Y."/>
            <person name="Ray L."/>
            <person name="Ren Q."/>
            <person name="Shaull S."/>
            <person name="Sloan D."/>
            <person name="Song L."/>
            <person name="Wang Q."/>
            <person name="Wang Y."/>
            <person name="Wang Z."/>
            <person name="White J."/>
            <person name="Willingham D."/>
            <person name="Wu H."/>
            <person name="Yao Z."/>
            <person name="Zhan M."/>
            <person name="Zhang G."/>
            <person name="Chissoe S."/>
            <person name="Murray J."/>
            <person name="Miller N."/>
            <person name="Minx P."/>
            <person name="Fulton R."/>
            <person name="Johnson D."/>
            <person name="Bemis G."/>
            <person name="Bentley D."/>
            <person name="Bradshaw H."/>
            <person name="Bourne S."/>
            <person name="Cordes M."/>
            <person name="Du Z."/>
            <person name="Fulton L."/>
            <person name="Goela D."/>
            <person name="Graves T."/>
            <person name="Hawkins J."/>
            <person name="Hinds K."/>
            <person name="Kemp K."/>
            <person name="Latreille P."/>
            <person name="Layman D."/>
            <person name="Ozersky P."/>
            <person name="Rohlfing T."/>
            <person name="Scheet P."/>
            <person name="Walker C."/>
            <person name="Wamsley A."/>
            <person name="Wohldmann P."/>
            <person name="Pepin K."/>
            <person name="Nelson J."/>
            <person name="Korf I."/>
            <person name="Bedell J.A."/>
            <person name="Hillier L.W."/>
            <person name="Mardis E."/>
            <person name="Waterston R."/>
            <person name="Wilson R."/>
            <person name="Emanuel B.S."/>
            <person name="Shaikh T."/>
            <person name="Kurahashi H."/>
            <person name="Saitta S."/>
            <person name="Budarf M.L."/>
            <person name="McDermid H.E."/>
            <person name="Johnson A."/>
            <person name="Wong A.C.C."/>
            <person name="Morrow B.E."/>
            <person name="Edelmann L."/>
            <person name="Kim U.J."/>
            <person name="Shizuya H."/>
            <person name="Simon M.I."/>
            <person name="Dumanski J.P."/>
            <person name="Peyrard M."/>
            <person name="Kedra D."/>
            <person name="Seroussi E."/>
            <person name="Fransson I."/>
            <person name="Tapia I."/>
            <person name="Bruder C.E."/>
            <person name="O'Brien K.P."/>
            <person name="Wilkinson P."/>
            <person name="Bodenteich A."/>
            <person name="Hartman K."/>
            <person name="Hu X."/>
            <person name="Khan A.S."/>
            <person name="Lane L."/>
            <person name="Tilahun Y."/>
            <person name="Wright H."/>
        </authorList>
    </citation>
    <scope>NUCLEOTIDE SEQUENCE [LARGE SCALE GENOMIC DNA]</scope>
</reference>
<reference key="6">
    <citation type="journal article" date="2004" name="Genome Res.">
        <title>The status, quality, and expansion of the NIH full-length cDNA project: the Mammalian Gene Collection (MGC).</title>
        <authorList>
            <consortium name="The MGC Project Team"/>
        </authorList>
    </citation>
    <scope>NUCLEOTIDE SEQUENCE [LARGE SCALE MRNA] (ISOFORM 1)</scope>
    <source>
        <tissue>Pancreas</tissue>
    </source>
</reference>
<reference key="7">
    <citation type="journal article" date="1998" name="J. Biol. Chem.">
        <title>Selective activation of p38 mitogen-activated protein (MAP) kinase isoforms by the MAP kinase kinases MKK3 and MKK6.</title>
        <authorList>
            <person name="Enslen H."/>
            <person name="Raingeaud J."/>
            <person name="Davis R.J."/>
        </authorList>
    </citation>
    <scope>FUNCTION IN PHOSPHORYLATION OF ATF2; ELK1 AND MBP</scope>
    <scope>ACTIVITY REGULATION</scope>
</reference>
<reference key="8">
    <citation type="journal article" date="1999" name="J. Biol. Chem.">
        <title>Stress-activated protein kinase-3 interacts with the PDZ domain of alpha1-syntrophin. A mechanism for specific substrate recognition.</title>
        <authorList>
            <person name="Hasegawa M."/>
            <person name="Cuenda A."/>
            <person name="Spillantini M.G."/>
            <person name="Thomas G.M."/>
            <person name="Buee-Scherrer V."/>
            <person name="Cohen P."/>
            <person name="Goedert M."/>
        </authorList>
    </citation>
    <scope>INTERACTION WITH SNTA1</scope>
    <scope>ACTIVITY REGULATION</scope>
    <scope>BIOPHYSICOCHEMICAL PROPERTIES</scope>
    <scope>CATALYTIC ACTIVITY</scope>
</reference>
<reference key="9">
    <citation type="journal article" date="2000" name="J. Biol. Chem.">
        <title>Differential activation of p38 mitogen-activated protein kinase isoforms depending on signal strength.</title>
        <authorList>
            <person name="Alonso G."/>
            <person name="Ambrosino C."/>
            <person name="Jones M."/>
            <person name="Nebreda A.R."/>
        </authorList>
    </citation>
    <scope>PHOSPHORYLATION BY MAP2K6/MKK6</scope>
</reference>
<reference key="10">
    <citation type="journal article" date="2000" name="Mol. Cell. Biol.">
        <title>Involvement of the MKK6-p38gamma cascade in gamma-radiation-induced cell cycle arrest.</title>
        <authorList>
            <person name="Wang X."/>
            <person name="McGowan C.H."/>
            <person name="Zhao M."/>
            <person name="He L."/>
            <person name="Downey J.S."/>
            <person name="Fearns C."/>
            <person name="Wang Y."/>
            <person name="Huang S."/>
            <person name="Han J."/>
        </authorList>
    </citation>
    <scope>FUNCTION IN REGULATION OF THE G2 CHECKPOINT</scope>
</reference>
<reference key="11">
    <citation type="journal article" date="2002" name="J. Mol. Cell. Cardiol.">
        <title>Cardiac expression and subcellular localization of the p38 mitogen-activated protein kinase member, stress-activated protein kinase-3 (SAPK3).</title>
        <authorList>
            <person name="Court N.W."/>
            <person name="dos Remedios C.G."/>
            <person name="Cordell J."/>
            <person name="Bogoyevitch M.A."/>
        </authorList>
    </citation>
    <scope>SUBCELLULAR LOCATION</scope>
    <scope>TISSUE SPECIFICITY</scope>
    <source>
        <tissue>Heart</tissue>
    </source>
</reference>
<reference key="12">
    <citation type="journal article" date="2002" name="Biochem. J.">
        <title>A new c-Jun N-terminal kinase (JNK)-interacting protein, Sab (SH3BP5), associates with mitochondria.</title>
        <authorList>
            <person name="Wiltshire C."/>
            <person name="Matsushita M."/>
            <person name="Tsukada S."/>
            <person name="Gillespie D.A."/>
            <person name="May G.H."/>
        </authorList>
    </citation>
    <scope>MUTAGENESIS</scope>
    <scope>SUBCELLULAR LOCATION</scope>
    <scope>INTERACTION WITH SH3BP5</scope>
</reference>
<reference key="13">
    <citation type="journal article" date="2004" name="Am. J. Physiol.">
        <title>p38gamma MAPK regulation of glucose transporter expression and glucose uptake in L6 myotubes and mouse skeletal muscle.</title>
        <authorList>
            <person name="Ho R.C."/>
            <person name="Alcazar O."/>
            <person name="Fujii N."/>
            <person name="Hirshman M.F."/>
            <person name="Goodyear L.J."/>
        </authorList>
    </citation>
    <scope>FUNCTION</scope>
</reference>
<reference key="14">
    <citation type="journal article" date="2004" name="J. Biol. Chem.">
        <title>Active mutants of the human p38alpha mitogen-activated protein kinase.</title>
        <authorList>
            <person name="Diskin R."/>
            <person name="Askari N."/>
            <person name="Capone R."/>
            <person name="Engelberg D."/>
            <person name="Livnah O."/>
        </authorList>
    </citation>
    <scope>MUTAGENESIS OF ASP-179 AND PHE-330</scope>
</reference>
<reference key="15">
    <citation type="journal article" date="2007" name="J. Biol. Chem.">
        <title>p38alpha antagonizes p38gamma activity through c-Jun-dependent ubiquitin-proteasome pathways in regulating Ras transformation and stress response.</title>
        <authorList>
            <person name="Qi X."/>
            <person name="Pohl N.M."/>
            <person name="Loesch M."/>
            <person name="Hou S."/>
            <person name="Li R."/>
            <person name="Qin J.Z."/>
            <person name="Cuenda A."/>
            <person name="Chen G."/>
        </authorList>
    </citation>
    <scope>FUNCTION</scope>
    <scope>INDUCTION</scope>
    <scope>PHOSPHORYLATION</scope>
    <scope>SUBCELLULAR LOCATION</scope>
    <scope>UBIQUITINATION</scope>
</reference>
<reference key="16">
    <citation type="journal article" date="2010" name="J. Cell Sci.">
        <title>p38gamma regulates interaction of nuclear PSF and RNA with the tumour-suppressor hDlg in response to osmotic shock.</title>
        <authorList>
            <person name="Sabio G."/>
            <person name="Cerezo-Guisado M.I."/>
            <person name="Del Reino P."/>
            <person name="Inesta-Vaquera F.A."/>
            <person name="Rousseau S."/>
            <person name="Arthur J.S."/>
            <person name="Campbell D.G."/>
            <person name="Centeno F."/>
            <person name="Cuenda A."/>
        </authorList>
    </citation>
    <scope>FUNCTION IN PHOSPHORYLATION OF DLG1</scope>
</reference>
<reference key="17">
    <citation type="journal article" date="2011" name="BMC Syst. Biol.">
        <title>Initial characterization of the human central proteome.</title>
        <authorList>
            <person name="Burkard T.R."/>
            <person name="Planyavsky M."/>
            <person name="Kaupe I."/>
            <person name="Breitwieser F.P."/>
            <person name="Buerckstuemmer T."/>
            <person name="Bennett K.L."/>
            <person name="Superti-Furga G."/>
            <person name="Colinge J."/>
        </authorList>
    </citation>
    <scope>IDENTIFICATION BY MASS SPECTROMETRY [LARGE SCALE ANALYSIS]</scope>
</reference>
<reference key="18">
    <citation type="journal article" date="2011" name="J. Cell Sci.">
        <title>Loss of p38gamma MAPK induces pleiotropic mitotic defects and massive cell death.</title>
        <authorList>
            <person name="Kukkonen-Macchi A."/>
            <person name="Sicora O."/>
            <person name="Kaczynska K."/>
            <person name="Oetken-Lindholm C."/>
            <person name="Pouwels J."/>
            <person name="Laine L."/>
            <person name="Kallio M.J."/>
        </authorList>
    </citation>
    <scope>FUNCTION</scope>
</reference>
<reference key="19">
    <citation type="journal article" date="2011" name="Neoplasia">
        <title>p38gamma mitogen-activated protein kinase contributes to oncogenic properties maintenance and resistance to poly (ADP-ribose)-polymerase-1 inhibition in breast cancer.</title>
        <authorList>
            <person name="Meng F."/>
            <person name="Zhang H."/>
            <person name="Liu G."/>
            <person name="Kreike B."/>
            <person name="Chen W."/>
            <person name="Sethi S."/>
            <person name="Miller F.R."/>
            <person name="Wu G."/>
        </authorList>
    </citation>
    <scope>INVOLVEMENT IN CANCER</scope>
</reference>
<reference key="20">
    <citation type="journal article" date="2010" name="Biochem. J.">
        <title>Mechanisms and functions of p38 MAPK signalling.</title>
        <authorList>
            <person name="Cuadrado A."/>
            <person name="Nebreda A.R."/>
        </authorList>
    </citation>
    <scope>REVIEW ON ACTIVITY REGULATION</scope>
    <scope>REVIEW ON FUNCTION</scope>
</reference>
<reference key="21">
    <citation type="journal article" date="2013" name="J. Proteome Res.">
        <title>Toward a comprehensive characterization of a human cancer cell phosphoproteome.</title>
        <authorList>
            <person name="Zhou H."/>
            <person name="Di Palma S."/>
            <person name="Preisinger C."/>
            <person name="Peng M."/>
            <person name="Polat A.N."/>
            <person name="Heck A.J."/>
            <person name="Mohammed S."/>
        </authorList>
    </citation>
    <scope>PHOSPHORYLATION [LARGE SCALE ANALYSIS] AT TYR-185</scope>
    <scope>IDENTIFICATION BY MASS SPECTROMETRY [LARGE SCALE ANALYSIS]</scope>
    <source>
        <tissue>Erythroleukemia</tissue>
    </source>
</reference>
<reference key="22">
    <citation type="journal article" date="2016" name="J. Biol. Chem.">
        <title>Molecular Basis of the Interaction of the Human Protein Tyrosine Phosphatase Non-receptor Type 4 (PTPN4) with the Mitogen-activated Protein Kinase p38gamma.</title>
        <authorList>
            <person name="Maisonneuve P."/>
            <person name="Caillet-Saguy C."/>
            <person name="Vaney M.C."/>
            <person name="Bibi-Zainab E."/>
            <person name="Sawyer K."/>
            <person name="Raynal B."/>
            <person name="Haouz A."/>
            <person name="Delepierre M."/>
            <person name="Lafon M."/>
            <person name="Cordier F."/>
            <person name="Wolff N."/>
        </authorList>
    </citation>
    <scope>INTERACTION WITH PTPN4</scope>
</reference>
<reference key="23">
    <citation type="journal article" date="1999" name="Structure">
        <title>The structure of phosphorylated p38gamma is monomeric and reveals a conserved activation-loop conformation.</title>
        <authorList>
            <person name="Bellon S."/>
            <person name="Fitzgibbon M.J."/>
            <person name="Fox T."/>
            <person name="Hsiao H.M."/>
            <person name="Wilson K.P."/>
        </authorList>
    </citation>
    <scope>X-RAY CRYSTALLOGRAPHY (2.4 ANGSTROMS)</scope>
    <scope>COFACTOR</scope>
    <scope>SUBUNIT</scope>
</reference>
<reference key="24">
    <citation type="journal article" date="2007" name="Nature">
        <title>Patterns of somatic mutation in human cancer genomes.</title>
        <authorList>
            <person name="Greenman C."/>
            <person name="Stephens P."/>
            <person name="Smith R."/>
            <person name="Dalgliesh G.L."/>
            <person name="Hunter C."/>
            <person name="Bignell G."/>
            <person name="Davies H."/>
            <person name="Teague J."/>
            <person name="Butler A."/>
            <person name="Stevens C."/>
            <person name="Edkins S."/>
            <person name="O'Meara S."/>
            <person name="Vastrik I."/>
            <person name="Schmidt E.E."/>
            <person name="Avis T."/>
            <person name="Barthorpe S."/>
            <person name="Bhamra G."/>
            <person name="Buck G."/>
            <person name="Choudhury B."/>
            <person name="Clements J."/>
            <person name="Cole J."/>
            <person name="Dicks E."/>
            <person name="Forbes S."/>
            <person name="Gray K."/>
            <person name="Halliday K."/>
            <person name="Harrison R."/>
            <person name="Hills K."/>
            <person name="Hinton J."/>
            <person name="Jenkinson A."/>
            <person name="Jones D."/>
            <person name="Menzies A."/>
            <person name="Mironenko T."/>
            <person name="Perry J."/>
            <person name="Raine K."/>
            <person name="Richardson D."/>
            <person name="Shepherd R."/>
            <person name="Small A."/>
            <person name="Tofts C."/>
            <person name="Varian J."/>
            <person name="Webb T."/>
            <person name="West S."/>
            <person name="Widaa S."/>
            <person name="Yates A."/>
            <person name="Cahill D.P."/>
            <person name="Louis D.N."/>
            <person name="Goldstraw P."/>
            <person name="Nicholson A.G."/>
            <person name="Brasseur F."/>
            <person name="Looijenga L."/>
            <person name="Weber B.L."/>
            <person name="Chiew Y.-E."/>
            <person name="DeFazio A."/>
            <person name="Greaves M.F."/>
            <person name="Green A.R."/>
            <person name="Campbell P."/>
            <person name="Birney E."/>
            <person name="Easton D.F."/>
            <person name="Chenevix-Trench G."/>
            <person name="Tan M.-H."/>
            <person name="Khoo S.K."/>
            <person name="Teh B.T."/>
            <person name="Yuen S.T."/>
            <person name="Leung S.Y."/>
            <person name="Wooster R."/>
            <person name="Futreal P.A."/>
            <person name="Stratton M.R."/>
        </authorList>
    </citation>
    <scope>VARIANTS [LARGE SCALE ANALYSIS] MET-103 AND ASN-230</scope>
</reference>
<organism>
    <name type="scientific">Homo sapiens</name>
    <name type="common">Human</name>
    <dbReference type="NCBI Taxonomy" id="9606"/>
    <lineage>
        <taxon>Eukaryota</taxon>
        <taxon>Metazoa</taxon>
        <taxon>Chordata</taxon>
        <taxon>Craniata</taxon>
        <taxon>Vertebrata</taxon>
        <taxon>Euteleostomi</taxon>
        <taxon>Mammalia</taxon>
        <taxon>Eutheria</taxon>
        <taxon>Euarchontoglires</taxon>
        <taxon>Primates</taxon>
        <taxon>Haplorrhini</taxon>
        <taxon>Catarrhini</taxon>
        <taxon>Hominidae</taxon>
        <taxon>Homo</taxon>
    </lineage>
</organism>
<comment type="function">
    <text evidence="6 9 13 14 15 17 18">Serine/threonine kinase which acts as an essential component of the MAP kinase signal transduction pathway. MAPK12 is one of the four p38 MAPKs which play an important role in the cascades of cellular responses evoked by extracellular stimuli such as pro-inflammatory cytokines or physical stress leading to direct activation of transcription factors such as ELK1 and ATF2. Accordingly, p38 MAPKs phosphorylate a broad range of proteins and it has been estimated that they may have approximately 200 to 300 substrates each. Some of the targets are downstream kinases such as MAPKAPK2, which are activated through phosphorylation and further phosphorylate additional targets. Plays a role in myoblast differentiation and also in the down-regulation of cyclin D1 in response to hypoxia in adrenal cells suggesting MAPK12 may inhibit cell proliferation while promoting differentiation. Phosphorylates DLG1. Following osmotic shock, MAPK12 in the cell nucleus increases its association with nuclear DLG1, thereby causing dissociation of DLG1-SFPQ complexes. This function is independent of its catalytic activity and could affect mRNA processing and/or gene transcription to aid cell adaptation to osmolarity changes in the environment. Regulates UV-induced checkpoint signaling and repair of UV-induced DNA damage and G2 arrest after gamma-radiation exposure. MAPK12 is involved in the regulation of SLC2A1 expression and basal glucose uptake in L6 myotubes; and negatively regulates SLC2A4 expression and contraction-mediated glucose uptake in adult skeletal muscle. C-Jun (JUN) phosphorylation is stimulated by MAPK14 and inhibited by MAPK12, leading to a distinct AP-1 regulation. MAPK12 is required for the normal kinetochore localization of PLK1, prevents chromosomal instability and supports mitotic cell viability. MAPK12-signaling is also positively regulating the expansion of transient amplifying myogenic precursor cells during muscle growth and regeneration.</text>
</comment>
<comment type="catalytic activity">
    <reaction evidence="4">
        <text>L-seryl-[protein] + ATP = O-phospho-L-seryl-[protein] + ADP + H(+)</text>
        <dbReference type="Rhea" id="RHEA:17989"/>
        <dbReference type="Rhea" id="RHEA-COMP:9863"/>
        <dbReference type="Rhea" id="RHEA-COMP:11604"/>
        <dbReference type="ChEBI" id="CHEBI:15378"/>
        <dbReference type="ChEBI" id="CHEBI:29999"/>
        <dbReference type="ChEBI" id="CHEBI:30616"/>
        <dbReference type="ChEBI" id="CHEBI:83421"/>
        <dbReference type="ChEBI" id="CHEBI:456216"/>
        <dbReference type="EC" id="2.7.11.24"/>
    </reaction>
</comment>
<comment type="catalytic activity">
    <reaction evidence="4">
        <text>L-threonyl-[protein] + ATP = O-phospho-L-threonyl-[protein] + ADP + H(+)</text>
        <dbReference type="Rhea" id="RHEA:46608"/>
        <dbReference type="Rhea" id="RHEA-COMP:11060"/>
        <dbReference type="Rhea" id="RHEA-COMP:11605"/>
        <dbReference type="ChEBI" id="CHEBI:15378"/>
        <dbReference type="ChEBI" id="CHEBI:30013"/>
        <dbReference type="ChEBI" id="CHEBI:30616"/>
        <dbReference type="ChEBI" id="CHEBI:61977"/>
        <dbReference type="ChEBI" id="CHEBI:456216"/>
        <dbReference type="EC" id="2.7.11.24"/>
    </reaction>
</comment>
<comment type="cofactor">
    <cofactor evidence="5">
        <name>Mg(2+)</name>
        <dbReference type="ChEBI" id="CHEBI:18420"/>
    </cofactor>
    <text evidence="5">Binds 2 magnesium ions.</text>
</comment>
<comment type="activity regulation">
    <text evidence="4 18">Activated by phosphorylation on threonine and tyrosine. MAP2K3/MKK3 and MAP2K6/MKK6 are both essential for the activation of MAPK12 induced by environmental stress, whereas MAP2K6/MKK6 is the major MAPK12 activator in response to TNF-alpha.</text>
</comment>
<comment type="biophysicochemical properties">
    <kinetics>
        <KM evidence="4">37 uM for ATP</KM>
        <KM evidence="4">313 uM for EGFR substrate peptide</KM>
        <KM evidence="4">254 uM for GST-ATF2</KM>
    </kinetics>
</comment>
<comment type="subunit">
    <text evidence="1 16">Monomer. Interacts with the PDZ domain of the syntrophin SNTA1. Interacts with SH3BP5. Interacts with LIN7C, SCRIB and SYNJ2BP (By similarity). Interacts with PTPN4; this interaction induces the activation of PTPN4 phosphatase activity.</text>
</comment>
<comment type="interaction">
    <interactant intactId="EBI-602406">
        <id>P53778</id>
    </interactant>
    <interactant intactId="EBI-77613">
        <id>P05067</id>
        <label>APP</label>
    </interactant>
    <organismsDiffer>false</organismsDiffer>
    <experiments>3</experiments>
</comment>
<comment type="interaction">
    <interactant intactId="EBI-602406">
        <id>P53778</id>
    </interactant>
    <interactant intactId="EBI-357481">
        <id>Q12959</id>
        <label>DLG1</label>
    </interactant>
    <organismsDiffer>false</organismsDiffer>
    <experiments>2</experiments>
</comment>
<comment type="interaction">
    <interactant intactId="EBI-602406">
        <id>P53778</id>
    </interactant>
    <interactant intactId="EBI-602382">
        <id>Q16512</id>
        <label>PKN1</label>
    </interactant>
    <organismsDiffer>false</organismsDiffer>
    <experiments>2</experiments>
</comment>
<comment type="interaction">
    <interactant intactId="EBI-602406">
        <id>P53778</id>
    </interactant>
    <interactant intactId="EBI-710431">
        <id>P29074</id>
        <label>PTPN4</label>
    </interactant>
    <organismsDiffer>false</organismsDiffer>
    <experiments>2</experiments>
</comment>
<comment type="interaction">
    <interactant intactId="EBI-602406">
        <id>P53778</id>
    </interactant>
    <interactant intactId="EBI-357345">
        <id>Q14160</id>
        <label>SCRIB</label>
    </interactant>
    <organismsDiffer>false</organismsDiffer>
    <experiments>6</experiments>
</comment>
<comment type="interaction">
    <interactant intactId="EBI-602406">
        <id>P53778</id>
    </interactant>
    <interactant intactId="EBI-747107">
        <id>Q8IUQ4</id>
        <label>SIAH1</label>
    </interactant>
    <organismsDiffer>false</organismsDiffer>
    <experiments>3</experiments>
</comment>
<comment type="subcellular location">
    <subcellularLocation>
        <location>Cytoplasm</location>
    </subcellularLocation>
    <subcellularLocation>
        <location>Nucleus</location>
    </subcellularLocation>
    <subcellularLocation>
        <location>Mitochondrion</location>
    </subcellularLocation>
    <text evidence="1">Mitochondrial when associated with SH3BP5. In skeletal muscle colocalizes with SNTA1 at the neuromuscular junction and throughout the sarcolemma (By similarity).</text>
</comment>
<comment type="alternative products">
    <event type="alternative splicing"/>
    <isoform>
        <id>P53778-1</id>
        <name>1</name>
        <sequence type="displayed"/>
    </isoform>
    <isoform>
        <id>P53778-2</id>
        <name>2</name>
        <sequence type="described" ref="VSP_055224"/>
    </isoform>
</comment>
<comment type="tissue specificity">
    <text evidence="8 17">Highly expressed in skeletal muscle and heart.</text>
</comment>
<comment type="induction">
    <text evidence="13">Expression of MAPK12 is down-regulation by MAPK14 activation.</text>
</comment>
<comment type="domain">
    <text>The TXY motif contains the threonine and tyrosine residues whose phosphorylation activates the MAP kinases.</text>
</comment>
<comment type="PTM">
    <text evidence="7 13">Dually phosphorylated on Thr-183 and Tyr-185 by MAP2K3/MKK3 and MAP2K6/MKK6, which activates the enzyme.</text>
</comment>
<comment type="PTM">
    <text evidence="13">Ubiquitinated. Ubiquitination leads to degradation by the proteasome pathway.</text>
</comment>
<comment type="disease">
    <text>MAPK is overexpressed in highly metastatic breast cancer cell lines and its expression is preferentially associated with basal-like and metastatic phenotypes of breast tumor samples.</text>
</comment>
<comment type="similarity">
    <text evidence="20">Belongs to the protein kinase superfamily. CMGC Ser/Thr protein kinase family. MAP kinase subfamily.</text>
</comment>
<comment type="online information" name="Atlas of Genetics and Cytogenetics in Oncology and Haematology">
    <link uri="https://atlasgeneticsoncology.org/gene/41290/MAPK12"/>
</comment>
<sequence length="367" mass="41940">MSSPPPARSGFYRQEVTKTAWEVRAVYRDLQPVGSGAYGAVCSAVDGRTGAKVAIKKLYRPFQSELFAKRAYRELRLLKHMRHENVIGLLDVFTPDETLDDFTDFYLVMPFMGTDLGKLMKHEKLGEDRIQFLVYQMLKGLRYIHAAGIIHRDLKPGNLAVNEDCELKILDFGLARQADSEMTGYVVTRWYRAPEVILNWMRYTQTVDIWSVGCIMAEMITGKTLFKGSDHLDQLKEIMKVTGTPPAEFVQRLQSDEAKNYMKGLPELEKKDFASILTNASPLAVNLLEKMLVLDAEQRVTAGEALAHPYFESLHDTEDEPQVQKYDDSFDDVDRTLDEWKRVTYKEVLSFKPPRQLGARVSKETPL</sequence>
<accession>P53778</accession>
<accession>Q14260</accession>
<accession>Q6IC53</accession>
<accession>Q99588</accession>
<accession>Q99672</accession>
<evidence type="ECO:0000250" key="1"/>
<evidence type="ECO:0000250" key="2">
    <source>
        <dbReference type="UniProtKB" id="Q63538"/>
    </source>
</evidence>
<evidence type="ECO:0000255" key="3">
    <source>
        <dbReference type="PROSITE-ProRule" id="PRU00159"/>
    </source>
</evidence>
<evidence type="ECO:0000269" key="4">
    <source>
    </source>
</evidence>
<evidence type="ECO:0000269" key="5">
    <source>
    </source>
</evidence>
<evidence type="ECO:0000269" key="6">
    <source>
    </source>
</evidence>
<evidence type="ECO:0000269" key="7">
    <source>
    </source>
</evidence>
<evidence type="ECO:0000269" key="8">
    <source>
    </source>
</evidence>
<evidence type="ECO:0000269" key="9">
    <source>
    </source>
</evidence>
<evidence type="ECO:0000269" key="10">
    <source>
    </source>
</evidence>
<evidence type="ECO:0000269" key="11">
    <source>
    </source>
</evidence>
<evidence type="ECO:0000269" key="12">
    <source>
    </source>
</evidence>
<evidence type="ECO:0000269" key="13">
    <source>
    </source>
</evidence>
<evidence type="ECO:0000269" key="14">
    <source>
    </source>
</evidence>
<evidence type="ECO:0000269" key="15">
    <source>
    </source>
</evidence>
<evidence type="ECO:0000269" key="16">
    <source>
    </source>
</evidence>
<evidence type="ECO:0000269" key="17">
    <source>
    </source>
</evidence>
<evidence type="ECO:0000269" key="18">
    <source>
    </source>
</evidence>
<evidence type="ECO:0000303" key="19">
    <source>
    </source>
</evidence>
<evidence type="ECO:0000305" key="20"/>
<evidence type="ECO:0007744" key="21">
    <source>
    </source>
</evidence>
<evidence type="ECO:0007829" key="22">
    <source>
        <dbReference type="PDB" id="1CM8"/>
    </source>
</evidence>
<evidence type="ECO:0007829" key="23">
    <source>
        <dbReference type="PDB" id="6UNA"/>
    </source>
</evidence>
<protein>
    <recommendedName>
        <fullName>Mitogen-activated protein kinase 12</fullName>
        <shortName>MAP kinase 12</shortName>
        <shortName>MAPK 12</shortName>
        <ecNumber evidence="4">2.7.11.24</ecNumber>
    </recommendedName>
    <alternativeName>
        <fullName>Extracellular signal-regulated kinase 6</fullName>
        <shortName>ERK-6</shortName>
    </alternativeName>
    <alternativeName>
        <fullName>Mitogen-activated protein kinase p38 gamma</fullName>
        <shortName>MAP kinase p38 gamma</shortName>
    </alternativeName>
    <alternativeName>
        <fullName>Stress-activated protein kinase 3</fullName>
    </alternativeName>
</protein>
<proteinExistence type="evidence at protein level"/>
<name>MK12_HUMAN</name>
<keyword id="KW-0002">3D-structure</keyword>
<keyword id="KW-0025">Alternative splicing</keyword>
<keyword id="KW-0067">ATP-binding</keyword>
<keyword id="KW-0131">Cell cycle</keyword>
<keyword id="KW-0963">Cytoplasm</keyword>
<keyword id="KW-0418">Kinase</keyword>
<keyword id="KW-0460">Magnesium</keyword>
<keyword id="KW-0479">Metal-binding</keyword>
<keyword id="KW-0496">Mitochondrion</keyword>
<keyword id="KW-0547">Nucleotide-binding</keyword>
<keyword id="KW-0539">Nucleus</keyword>
<keyword id="KW-0597">Phosphoprotein</keyword>
<keyword id="KW-1267">Proteomics identification</keyword>
<keyword id="KW-1185">Reference proteome</keyword>
<keyword id="KW-0723">Serine/threonine-protein kinase</keyword>
<keyword id="KW-0346">Stress response</keyword>
<keyword id="KW-0804">Transcription</keyword>
<keyword id="KW-0805">Transcription regulation</keyword>
<keyword id="KW-0808">Transferase</keyword>
<keyword id="KW-0832">Ubl conjugation</keyword>